<comment type="catalytic activity">
    <reaction>
        <text>H2 + A = AH2</text>
        <dbReference type="Rhea" id="RHEA:12116"/>
        <dbReference type="ChEBI" id="CHEBI:13193"/>
        <dbReference type="ChEBI" id="CHEBI:17499"/>
        <dbReference type="ChEBI" id="CHEBI:18276"/>
        <dbReference type="EC" id="1.12.99.6"/>
    </reaction>
</comment>
<comment type="cofactor">
    <cofactor evidence="1">
        <name>[3Fe-4S] cluster</name>
        <dbReference type="ChEBI" id="CHEBI:21137"/>
    </cofactor>
    <text evidence="1">Binds 1 [3Fe-4S] cluster.</text>
</comment>
<comment type="cofactor">
    <cofactor evidence="1">
        <name>[4Fe-4S] cluster</name>
        <dbReference type="ChEBI" id="CHEBI:49883"/>
    </cofactor>
    <text evidence="1">Binds 2 [4Fe-4S] clusters.</text>
</comment>
<comment type="subunit">
    <text>Heterodimer of a large and a small subunit.</text>
</comment>
<comment type="subcellular location">
    <subcellularLocation>
        <location>Periplasm</location>
    </subcellularLocation>
</comment>
<comment type="similarity">
    <text evidence="2">Belongs to the [NiFe]/[NiFeSe] hydrogenase small subunit family.</text>
</comment>
<keyword id="KW-0003">3Fe-4S</keyword>
<keyword id="KW-0004">4Fe-4S</keyword>
<keyword id="KW-0903">Direct protein sequencing</keyword>
<keyword id="KW-0408">Iron</keyword>
<keyword id="KW-0411">Iron-sulfur</keyword>
<keyword id="KW-0479">Metal-binding</keyword>
<keyword id="KW-0560">Oxidoreductase</keyword>
<keyword id="KW-0574">Periplasm</keyword>
<dbReference type="EC" id="1.12.99.6"/>
<dbReference type="SMR" id="P13064"/>
<dbReference type="STRING" id="52561.SAMN05421830_108114"/>
<dbReference type="GO" id="GO:0042597">
    <property type="term" value="C:periplasmic space"/>
    <property type="evidence" value="ECO:0007669"/>
    <property type="project" value="UniProtKB-SubCell"/>
</dbReference>
<dbReference type="GO" id="GO:0051538">
    <property type="term" value="F:3 iron, 4 sulfur cluster binding"/>
    <property type="evidence" value="ECO:0007669"/>
    <property type="project" value="UniProtKB-KW"/>
</dbReference>
<dbReference type="GO" id="GO:0051539">
    <property type="term" value="F:4 iron, 4 sulfur cluster binding"/>
    <property type="evidence" value="ECO:0007669"/>
    <property type="project" value="UniProtKB-KW"/>
</dbReference>
<dbReference type="GO" id="GO:0033748">
    <property type="term" value="F:hydrogenase (acceptor) activity"/>
    <property type="evidence" value="ECO:0007669"/>
    <property type="project" value="UniProtKB-EC"/>
</dbReference>
<dbReference type="GO" id="GO:0046872">
    <property type="term" value="F:metal ion binding"/>
    <property type="evidence" value="ECO:0007669"/>
    <property type="project" value="UniProtKB-KW"/>
</dbReference>
<dbReference type="Gene3D" id="3.40.50.700">
    <property type="entry name" value="NADH:ubiquinone oxidoreductase-like, 20kDa subunit"/>
    <property type="match status" value="1"/>
</dbReference>
<dbReference type="InterPro" id="IPR037024">
    <property type="entry name" value="NiFe_Hase_small_N_sf"/>
</dbReference>
<dbReference type="SUPFAM" id="SSF56770">
    <property type="entry name" value="HydA/Nqo6-like"/>
    <property type="match status" value="1"/>
</dbReference>
<name>PHSS_DESNO</name>
<feature type="chain" id="PRO_0000204355" description="Periplasmic [NiFeSe] hydrogenase small subunit">
    <location>
        <begin position="1"/>
        <end position="32" status="greater than"/>
    </location>
</feature>
<feature type="binding site" evidence="1">
    <location>
        <position position="18"/>
    </location>
    <ligand>
        <name>[4Fe-4S] cluster</name>
        <dbReference type="ChEBI" id="CHEBI:49883"/>
        <label>1</label>
    </ligand>
</feature>
<feature type="binding site" evidence="1">
    <location>
        <position position="21"/>
    </location>
    <ligand>
        <name>[4Fe-4S] cluster</name>
        <dbReference type="ChEBI" id="CHEBI:49883"/>
        <label>1</label>
    </ligand>
</feature>
<feature type="non-terminal residue">
    <location>
        <position position="32"/>
    </location>
</feature>
<organism>
    <name type="scientific">Desulfomicrobium norvegicum (strain DSM 1741 / NCIMB 8310)</name>
    <name type="common">Desulfovibrio baculatus (strain Norway 4)</name>
    <name type="synonym">Desulfovibrio desulfuricans (strain Norway 4)</name>
    <dbReference type="NCBI Taxonomy" id="52561"/>
    <lineage>
        <taxon>Bacteria</taxon>
        <taxon>Pseudomonadati</taxon>
        <taxon>Thermodesulfobacteriota</taxon>
        <taxon>Desulfovibrionia</taxon>
        <taxon>Desulfovibrionales</taxon>
        <taxon>Desulfomicrobiaceae</taxon>
        <taxon>Desulfomicrobium</taxon>
    </lineage>
</organism>
<evidence type="ECO:0000250" key="1"/>
<evidence type="ECO:0000305" key="2"/>
<proteinExistence type="evidence at protein level"/>
<sequence length="32" mass="3305">MTQGAKKAPVIWVQGEGCTGCSVSLLNAVCPR</sequence>
<accession>P13064</accession>
<reference key="1">
    <citation type="journal article" date="1987" name="Biochem. Biophys. Res. Commun.">
        <title>Identification of three classes of hydrogenase in the genus, Desulfovibrio.</title>
        <authorList>
            <person name="Prickril B.C."/>
            <person name="He S.H."/>
            <person name="Li C."/>
            <person name="Menon N.K."/>
            <person name="Choi E.S."/>
            <person name="Przybyla A.E."/>
            <person name="Dervartanian D.V."/>
            <person name="Peck H.D. Jr."/>
            <person name="Fauque G."/>
            <person name="le Gall J."/>
            <person name="Teixeira M."/>
            <person name="Moura I."/>
            <person name="Moura J.J.G."/>
            <person name="Patil D."/>
            <person name="Huynh B.H."/>
        </authorList>
    </citation>
    <scope>PROTEIN SEQUENCE</scope>
</reference>
<protein>
    <recommendedName>
        <fullName>Periplasmic [NiFeSe] hydrogenase small subunit</fullName>
        <ecNumber>1.12.99.6</ecNumber>
    </recommendedName>
    <alternativeName>
        <fullName>NiFeSe hydrogenlyase small chain</fullName>
    </alternativeName>
</protein>